<name>SYS_RHOPS</name>
<proteinExistence type="inferred from homology"/>
<evidence type="ECO:0000255" key="1">
    <source>
        <dbReference type="HAMAP-Rule" id="MF_00176"/>
    </source>
</evidence>
<reference key="1">
    <citation type="submission" date="2006-03" db="EMBL/GenBank/DDBJ databases">
        <title>Complete sequence of Rhodopseudomonas palustris BisB5.</title>
        <authorList>
            <consortium name="US DOE Joint Genome Institute"/>
            <person name="Copeland A."/>
            <person name="Lucas S."/>
            <person name="Lapidus A."/>
            <person name="Barry K."/>
            <person name="Detter J.C."/>
            <person name="Glavina del Rio T."/>
            <person name="Hammon N."/>
            <person name="Israni S."/>
            <person name="Dalin E."/>
            <person name="Tice H."/>
            <person name="Pitluck S."/>
            <person name="Chain P."/>
            <person name="Malfatti S."/>
            <person name="Shin M."/>
            <person name="Vergez L."/>
            <person name="Schmutz J."/>
            <person name="Larimer F."/>
            <person name="Land M."/>
            <person name="Hauser L."/>
            <person name="Pelletier D.A."/>
            <person name="Kyrpides N."/>
            <person name="Lykidis A."/>
            <person name="Oda Y."/>
            <person name="Harwood C.S."/>
            <person name="Richardson P."/>
        </authorList>
    </citation>
    <scope>NUCLEOTIDE SEQUENCE [LARGE SCALE GENOMIC DNA]</scope>
    <source>
        <strain>BisB5</strain>
    </source>
</reference>
<comment type="function">
    <text evidence="1">Catalyzes the attachment of serine to tRNA(Ser). Is also able to aminoacylate tRNA(Sec) with serine, to form the misacylated tRNA L-seryl-tRNA(Sec), which will be further converted into selenocysteinyl-tRNA(Sec).</text>
</comment>
<comment type="catalytic activity">
    <reaction evidence="1">
        <text>tRNA(Ser) + L-serine + ATP = L-seryl-tRNA(Ser) + AMP + diphosphate + H(+)</text>
        <dbReference type="Rhea" id="RHEA:12292"/>
        <dbReference type="Rhea" id="RHEA-COMP:9669"/>
        <dbReference type="Rhea" id="RHEA-COMP:9703"/>
        <dbReference type="ChEBI" id="CHEBI:15378"/>
        <dbReference type="ChEBI" id="CHEBI:30616"/>
        <dbReference type="ChEBI" id="CHEBI:33019"/>
        <dbReference type="ChEBI" id="CHEBI:33384"/>
        <dbReference type="ChEBI" id="CHEBI:78442"/>
        <dbReference type="ChEBI" id="CHEBI:78533"/>
        <dbReference type="ChEBI" id="CHEBI:456215"/>
        <dbReference type="EC" id="6.1.1.11"/>
    </reaction>
</comment>
<comment type="catalytic activity">
    <reaction evidence="1">
        <text>tRNA(Sec) + L-serine + ATP = L-seryl-tRNA(Sec) + AMP + diphosphate + H(+)</text>
        <dbReference type="Rhea" id="RHEA:42580"/>
        <dbReference type="Rhea" id="RHEA-COMP:9742"/>
        <dbReference type="Rhea" id="RHEA-COMP:10128"/>
        <dbReference type="ChEBI" id="CHEBI:15378"/>
        <dbReference type="ChEBI" id="CHEBI:30616"/>
        <dbReference type="ChEBI" id="CHEBI:33019"/>
        <dbReference type="ChEBI" id="CHEBI:33384"/>
        <dbReference type="ChEBI" id="CHEBI:78442"/>
        <dbReference type="ChEBI" id="CHEBI:78533"/>
        <dbReference type="ChEBI" id="CHEBI:456215"/>
        <dbReference type="EC" id="6.1.1.11"/>
    </reaction>
</comment>
<comment type="pathway">
    <text evidence="1">Aminoacyl-tRNA biosynthesis; selenocysteinyl-tRNA(Sec) biosynthesis; L-seryl-tRNA(Sec) from L-serine and tRNA(Sec): step 1/1.</text>
</comment>
<comment type="subunit">
    <text evidence="1">Homodimer. The tRNA molecule binds across the dimer.</text>
</comment>
<comment type="subcellular location">
    <subcellularLocation>
        <location evidence="1">Cytoplasm</location>
    </subcellularLocation>
</comment>
<comment type="domain">
    <text evidence="1">Consists of two distinct domains, a catalytic core and a N-terminal extension that is involved in tRNA binding.</text>
</comment>
<comment type="similarity">
    <text evidence="1">Belongs to the class-II aminoacyl-tRNA synthetase family. Type-1 seryl-tRNA synthetase subfamily.</text>
</comment>
<sequence length="434" mass="47241">MHDIKAIRDNPTAFDAAYTRRGLSPIADSLIKLDETRRIAILASEQAQARRNAASKEIGEAKKAKDNARAEVLMAEVAELKTTMPALEAAVKDADEALKTALSEIPNLPLADVPEGADEHGNVERHHFGAKRSYTFTPKAHDDLGEALGMMDFEAAAKLSGARFVVLKNGLARLERAIGQFFLDVHTGEHGYTEVNPPLLVKDDAMFGTAQLPKFRDDQFAAGAIGSGGEGYWLIPTAEVSLTNLVRESILDEKELPMRLTALTPCFRAEAGAAGRDTRGMIRQHQFTKVELVSITTPEKSKDEHERMLSCAEEVLRRLGLHYRVMTLCTGDMGFASQKTYDIEVWMPGQGEGGAYREISSCSVCGDFQARRMDARSRGPDGKPRFVHTLNGSGTAVGRALIAVIENYQQEDGSIAVPDVLLPYMGGLKVIAAA</sequence>
<dbReference type="EC" id="6.1.1.11" evidence="1"/>
<dbReference type="EMBL" id="CP000283">
    <property type="protein sequence ID" value="ABE40015.1"/>
    <property type="molecule type" value="Genomic_DNA"/>
</dbReference>
<dbReference type="SMR" id="Q136H4"/>
<dbReference type="STRING" id="316057.RPD_2787"/>
<dbReference type="KEGG" id="rpd:RPD_2787"/>
<dbReference type="eggNOG" id="COG0172">
    <property type="taxonomic scope" value="Bacteria"/>
</dbReference>
<dbReference type="HOGENOM" id="CLU_023797_1_1_5"/>
<dbReference type="BioCyc" id="RPAL316057:RPD_RS14000-MONOMER"/>
<dbReference type="UniPathway" id="UPA00906">
    <property type="reaction ID" value="UER00895"/>
</dbReference>
<dbReference type="Proteomes" id="UP000001818">
    <property type="component" value="Chromosome"/>
</dbReference>
<dbReference type="GO" id="GO:0005737">
    <property type="term" value="C:cytoplasm"/>
    <property type="evidence" value="ECO:0007669"/>
    <property type="project" value="UniProtKB-SubCell"/>
</dbReference>
<dbReference type="GO" id="GO:0005524">
    <property type="term" value="F:ATP binding"/>
    <property type="evidence" value="ECO:0007669"/>
    <property type="project" value="UniProtKB-UniRule"/>
</dbReference>
<dbReference type="GO" id="GO:0004828">
    <property type="term" value="F:serine-tRNA ligase activity"/>
    <property type="evidence" value="ECO:0007669"/>
    <property type="project" value="UniProtKB-UniRule"/>
</dbReference>
<dbReference type="GO" id="GO:0016260">
    <property type="term" value="P:selenocysteine biosynthetic process"/>
    <property type="evidence" value="ECO:0007669"/>
    <property type="project" value="UniProtKB-UniRule"/>
</dbReference>
<dbReference type="GO" id="GO:0006434">
    <property type="term" value="P:seryl-tRNA aminoacylation"/>
    <property type="evidence" value="ECO:0007669"/>
    <property type="project" value="UniProtKB-UniRule"/>
</dbReference>
<dbReference type="CDD" id="cd00770">
    <property type="entry name" value="SerRS_core"/>
    <property type="match status" value="1"/>
</dbReference>
<dbReference type="Gene3D" id="3.30.930.10">
    <property type="entry name" value="Bira Bifunctional Protein, Domain 2"/>
    <property type="match status" value="1"/>
</dbReference>
<dbReference type="Gene3D" id="1.10.287.40">
    <property type="entry name" value="Serine-tRNA synthetase, tRNA binding domain"/>
    <property type="match status" value="1"/>
</dbReference>
<dbReference type="HAMAP" id="MF_00176">
    <property type="entry name" value="Ser_tRNA_synth_type1"/>
    <property type="match status" value="1"/>
</dbReference>
<dbReference type="InterPro" id="IPR002314">
    <property type="entry name" value="aa-tRNA-synt_IIb"/>
</dbReference>
<dbReference type="InterPro" id="IPR006195">
    <property type="entry name" value="aa-tRNA-synth_II"/>
</dbReference>
<dbReference type="InterPro" id="IPR045864">
    <property type="entry name" value="aa-tRNA-synth_II/BPL/LPL"/>
</dbReference>
<dbReference type="InterPro" id="IPR002317">
    <property type="entry name" value="Ser-tRNA-ligase_type_1"/>
</dbReference>
<dbReference type="InterPro" id="IPR015866">
    <property type="entry name" value="Ser-tRNA-synth_1_N"/>
</dbReference>
<dbReference type="InterPro" id="IPR042103">
    <property type="entry name" value="SerRS_1_N_sf"/>
</dbReference>
<dbReference type="InterPro" id="IPR033729">
    <property type="entry name" value="SerRS_core"/>
</dbReference>
<dbReference type="InterPro" id="IPR010978">
    <property type="entry name" value="tRNA-bd_arm"/>
</dbReference>
<dbReference type="NCBIfam" id="TIGR00414">
    <property type="entry name" value="serS"/>
    <property type="match status" value="1"/>
</dbReference>
<dbReference type="PANTHER" id="PTHR43697:SF1">
    <property type="entry name" value="SERINE--TRNA LIGASE"/>
    <property type="match status" value="1"/>
</dbReference>
<dbReference type="PANTHER" id="PTHR43697">
    <property type="entry name" value="SERYL-TRNA SYNTHETASE"/>
    <property type="match status" value="1"/>
</dbReference>
<dbReference type="Pfam" id="PF02403">
    <property type="entry name" value="Seryl_tRNA_N"/>
    <property type="match status" value="1"/>
</dbReference>
<dbReference type="Pfam" id="PF00587">
    <property type="entry name" value="tRNA-synt_2b"/>
    <property type="match status" value="1"/>
</dbReference>
<dbReference type="PIRSF" id="PIRSF001529">
    <property type="entry name" value="Ser-tRNA-synth_IIa"/>
    <property type="match status" value="1"/>
</dbReference>
<dbReference type="PRINTS" id="PR00981">
    <property type="entry name" value="TRNASYNTHSER"/>
</dbReference>
<dbReference type="SUPFAM" id="SSF55681">
    <property type="entry name" value="Class II aaRS and biotin synthetases"/>
    <property type="match status" value="1"/>
</dbReference>
<dbReference type="SUPFAM" id="SSF46589">
    <property type="entry name" value="tRNA-binding arm"/>
    <property type="match status" value="1"/>
</dbReference>
<dbReference type="PROSITE" id="PS50862">
    <property type="entry name" value="AA_TRNA_LIGASE_II"/>
    <property type="match status" value="1"/>
</dbReference>
<gene>
    <name evidence="1" type="primary">serS</name>
    <name type="ordered locus">RPD_2787</name>
</gene>
<protein>
    <recommendedName>
        <fullName evidence="1">Serine--tRNA ligase</fullName>
        <ecNumber evidence="1">6.1.1.11</ecNumber>
    </recommendedName>
    <alternativeName>
        <fullName evidence="1">Seryl-tRNA synthetase</fullName>
        <shortName evidence="1">SerRS</shortName>
    </alternativeName>
    <alternativeName>
        <fullName evidence="1">Seryl-tRNA(Ser/Sec) synthetase</fullName>
    </alternativeName>
</protein>
<organism>
    <name type="scientific">Rhodopseudomonas palustris (strain BisB5)</name>
    <dbReference type="NCBI Taxonomy" id="316057"/>
    <lineage>
        <taxon>Bacteria</taxon>
        <taxon>Pseudomonadati</taxon>
        <taxon>Pseudomonadota</taxon>
        <taxon>Alphaproteobacteria</taxon>
        <taxon>Hyphomicrobiales</taxon>
        <taxon>Nitrobacteraceae</taxon>
        <taxon>Rhodopseudomonas</taxon>
    </lineage>
</organism>
<feature type="chain" id="PRO_1000019795" description="Serine--tRNA ligase">
    <location>
        <begin position="1"/>
        <end position="434"/>
    </location>
</feature>
<feature type="binding site" evidence="1">
    <location>
        <begin position="237"/>
        <end position="239"/>
    </location>
    <ligand>
        <name>L-serine</name>
        <dbReference type="ChEBI" id="CHEBI:33384"/>
    </ligand>
</feature>
<feature type="binding site" evidence="1">
    <location>
        <begin position="268"/>
        <end position="270"/>
    </location>
    <ligand>
        <name>ATP</name>
        <dbReference type="ChEBI" id="CHEBI:30616"/>
    </ligand>
</feature>
<feature type="binding site" evidence="1">
    <location>
        <position position="291"/>
    </location>
    <ligand>
        <name>L-serine</name>
        <dbReference type="ChEBI" id="CHEBI:33384"/>
    </ligand>
</feature>
<feature type="binding site" evidence="1">
    <location>
        <begin position="358"/>
        <end position="361"/>
    </location>
    <ligand>
        <name>ATP</name>
        <dbReference type="ChEBI" id="CHEBI:30616"/>
    </ligand>
</feature>
<feature type="binding site" evidence="1">
    <location>
        <position position="393"/>
    </location>
    <ligand>
        <name>L-serine</name>
        <dbReference type="ChEBI" id="CHEBI:33384"/>
    </ligand>
</feature>
<keyword id="KW-0030">Aminoacyl-tRNA synthetase</keyword>
<keyword id="KW-0067">ATP-binding</keyword>
<keyword id="KW-0963">Cytoplasm</keyword>
<keyword id="KW-0436">Ligase</keyword>
<keyword id="KW-0547">Nucleotide-binding</keyword>
<keyword id="KW-0648">Protein biosynthesis</keyword>
<accession>Q136H4</accession>